<organism>
    <name type="scientific">Halalkalibacterium halodurans (strain ATCC BAA-125 / DSM 18197 / FERM 7344 / JCM 9153 / C-125)</name>
    <name type="common">Bacillus halodurans</name>
    <dbReference type="NCBI Taxonomy" id="272558"/>
    <lineage>
        <taxon>Bacteria</taxon>
        <taxon>Bacillati</taxon>
        <taxon>Bacillota</taxon>
        <taxon>Bacilli</taxon>
        <taxon>Bacillales</taxon>
        <taxon>Bacillaceae</taxon>
        <taxon>Halalkalibacterium (ex Joshi et al. 2022)</taxon>
    </lineage>
</organism>
<feature type="chain" id="PRO_0000201745" description="RQC P-site tRNA stabilizing factor">
    <location>
        <begin position="1"/>
        <end position="88"/>
    </location>
</feature>
<feature type="domain" description="S4 RNA-binding" evidence="1">
    <location>
        <begin position="1"/>
        <end position="67"/>
    </location>
</feature>
<comment type="function">
    <text evidence="1">Key component of the ribosome quality control system (RQC), a ribosome-associated complex that mediates the extraction of incompletely synthesized nascent chains from stalled ribosomes and their subsequent degradation. RqcH recruits Ala-charged tRNA, and with RqcP directs the elongation of stalled nascent chains on 50S ribosomal subunits, leading to non-templated C-terminal alanine extensions (Ala tail). The Ala tail promotes nascent chain degradation. RqcP is associated with the translocation-like movement of the peptidyl-tRNA from the A-site into the P-site.</text>
</comment>
<comment type="subunit">
    <text evidence="1">Associates with stalled 50S ribosomal subunits. Binds to RqcH, 23S rRNA and the P-site tRNA. Does not require RqcH for association with 50S subunits.</text>
</comment>
<comment type="similarity">
    <text evidence="1">Belongs to the RqcP family.</text>
</comment>
<protein>
    <recommendedName>
        <fullName evidence="1">RQC P-site tRNA stabilizing factor</fullName>
        <shortName evidence="1">RqcP</shortName>
    </recommendedName>
    <alternativeName>
        <fullName evidence="1">Ribosome-associated protein quality control protein P</fullName>
    </alternativeName>
</protein>
<evidence type="ECO:0000255" key="1">
    <source>
        <dbReference type="HAMAP-Rule" id="MF_00871"/>
    </source>
</evidence>
<gene>
    <name evidence="1" type="primary">rqcP</name>
    <name type="ordered locus">BH0073</name>
</gene>
<proteinExistence type="inferred from homology"/>
<keyword id="KW-0648">Protein biosynthesis</keyword>
<keyword id="KW-1185">Reference proteome</keyword>
<keyword id="KW-0694">RNA-binding</keyword>
<keyword id="KW-0699">rRNA-binding</keyword>
<keyword id="KW-0820">tRNA-binding</keyword>
<accession>Q9KGI8</accession>
<sequence>MRLDKFLKVSRLIKRRTLAKEVCEQGRITVNGNVAKAGTVVKEGDELVIRFGQKLVTVEITNVKETVRKEEASTLYEVKKEEPISKSE</sequence>
<dbReference type="EMBL" id="BA000004">
    <property type="protein sequence ID" value="BAB03792.1"/>
    <property type="molecule type" value="Genomic_DNA"/>
</dbReference>
<dbReference type="PIR" id="A83659">
    <property type="entry name" value="A83659"/>
</dbReference>
<dbReference type="RefSeq" id="WP_010896257.1">
    <property type="nucleotide sequence ID" value="NC_002570.2"/>
</dbReference>
<dbReference type="SMR" id="Q9KGI8"/>
<dbReference type="STRING" id="272558.gene:10725895"/>
<dbReference type="GeneID" id="87595597"/>
<dbReference type="KEGG" id="bha:BH0073"/>
<dbReference type="eggNOG" id="COG1188">
    <property type="taxonomic scope" value="Bacteria"/>
</dbReference>
<dbReference type="HOGENOM" id="CLU_101003_4_0_9"/>
<dbReference type="OrthoDB" id="9805210at2"/>
<dbReference type="Proteomes" id="UP000001258">
    <property type="component" value="Chromosome"/>
</dbReference>
<dbReference type="GO" id="GO:0019843">
    <property type="term" value="F:rRNA binding"/>
    <property type="evidence" value="ECO:0007669"/>
    <property type="project" value="UniProtKB-KW"/>
</dbReference>
<dbReference type="GO" id="GO:0000049">
    <property type="term" value="F:tRNA binding"/>
    <property type="evidence" value="ECO:0007669"/>
    <property type="project" value="UniProtKB-KW"/>
</dbReference>
<dbReference type="GO" id="GO:0006412">
    <property type="term" value="P:translation"/>
    <property type="evidence" value="ECO:0007669"/>
    <property type="project" value="UniProtKB-KW"/>
</dbReference>
<dbReference type="CDD" id="cd00165">
    <property type="entry name" value="S4"/>
    <property type="match status" value="1"/>
</dbReference>
<dbReference type="Gene3D" id="3.10.290.10">
    <property type="entry name" value="RNA-binding S4 domain"/>
    <property type="match status" value="1"/>
</dbReference>
<dbReference type="HAMAP" id="MF_00871">
    <property type="entry name" value="RqcP"/>
    <property type="match status" value="1"/>
</dbReference>
<dbReference type="InterPro" id="IPR025490">
    <property type="entry name" value="RqcP"/>
</dbReference>
<dbReference type="InterPro" id="IPR002942">
    <property type="entry name" value="S4_RNA-bd"/>
</dbReference>
<dbReference type="InterPro" id="IPR036986">
    <property type="entry name" value="S4_RNA-bd_sf"/>
</dbReference>
<dbReference type="Pfam" id="PF01479">
    <property type="entry name" value="S4"/>
    <property type="match status" value="1"/>
</dbReference>
<dbReference type="PIRSF" id="PIRSF038881">
    <property type="entry name" value="RNAbp_HP1423"/>
    <property type="match status" value="1"/>
</dbReference>
<dbReference type="SMART" id="SM00363">
    <property type="entry name" value="S4"/>
    <property type="match status" value="1"/>
</dbReference>
<dbReference type="SUPFAM" id="SSF55174">
    <property type="entry name" value="Alpha-L RNA-binding motif"/>
    <property type="match status" value="1"/>
</dbReference>
<dbReference type="PROSITE" id="PS50889">
    <property type="entry name" value="S4"/>
    <property type="match status" value="1"/>
</dbReference>
<reference key="1">
    <citation type="journal article" date="2000" name="Nucleic Acids Res.">
        <title>Complete genome sequence of the alkaliphilic bacterium Bacillus halodurans and genomic sequence comparison with Bacillus subtilis.</title>
        <authorList>
            <person name="Takami H."/>
            <person name="Nakasone K."/>
            <person name="Takaki Y."/>
            <person name="Maeno G."/>
            <person name="Sasaki R."/>
            <person name="Masui N."/>
            <person name="Fuji F."/>
            <person name="Hirama C."/>
            <person name="Nakamura Y."/>
            <person name="Ogasawara N."/>
            <person name="Kuhara S."/>
            <person name="Horikoshi K."/>
        </authorList>
    </citation>
    <scope>NUCLEOTIDE SEQUENCE [LARGE SCALE GENOMIC DNA]</scope>
    <source>
        <strain>ATCC BAA-125 / DSM 18197 / FERM 7344 / JCM 9153 / C-125</strain>
    </source>
</reference>
<name>RQCP_HALH5</name>